<evidence type="ECO:0000255" key="1">
    <source>
        <dbReference type="HAMAP-Rule" id="MF_01201"/>
    </source>
</evidence>
<feature type="chain" id="PRO_0000114527" description="Alanine racemase">
    <location>
        <begin position="1"/>
        <end position="367"/>
    </location>
</feature>
<feature type="active site" description="Proton acceptor; specific for D-alanine" evidence="1">
    <location>
        <position position="40"/>
    </location>
</feature>
<feature type="active site" description="Proton acceptor; specific for L-alanine" evidence="1">
    <location>
        <position position="263"/>
    </location>
</feature>
<feature type="binding site" evidence="1">
    <location>
        <position position="136"/>
    </location>
    <ligand>
        <name>substrate</name>
    </ligand>
</feature>
<feature type="binding site" evidence="1">
    <location>
        <position position="310"/>
    </location>
    <ligand>
        <name>substrate</name>
    </ligand>
</feature>
<feature type="modified residue" description="N6-(pyridoxal phosphate)lysine" evidence="1">
    <location>
        <position position="40"/>
    </location>
</feature>
<proteinExistence type="evidence at protein level"/>
<sequence length="367" mass="40677">MKTSPHRNTSAIVDLKAIRNNIEKFKKHINPNAEIWPAVKADAYGHGSIEVSKAVSDLVGGFCVSNLDEAIELRNHLVTKPILVLSGIVPEDVDIAAALNISLTAPSLEWLKLVVQEEAELSDLKIHIGVDSGMGRIGIRDVEEANQMIELADKYAINFEGIFTHFATADMADETKFKNQQARFNKIMAGLSRQPKFIHSTNTAAALWHKEQVQAIERLGISMYGLNPSGKTLELPFEIEPALSLVSELTHIKKIAAGETVGYGATYETSEETWIGTVPIGYADGWTRQMQGFKVLVDGKFCEIVGRVCMDQMMIKLDKSYPLGTKVTLIGRDKANEITTTDVADWRGTINYEVLCLLSDRIKRIYK</sequence>
<dbReference type="EC" id="5.1.1.1" evidence="1"/>
<dbReference type="EMBL" id="Y18148">
    <property type="protein sequence ID" value="CAB56755.2"/>
    <property type="molecule type" value="Genomic_DNA"/>
</dbReference>
<dbReference type="EMBL" id="AM406671">
    <property type="protein sequence ID" value="CAL98277.1"/>
    <property type="molecule type" value="Genomic_DNA"/>
</dbReference>
<dbReference type="RefSeq" id="WP_011835506.1">
    <property type="nucleotide sequence ID" value="NC_009004.1"/>
</dbReference>
<dbReference type="SMR" id="Q9RLU5"/>
<dbReference type="STRING" id="416870.llmg_1704"/>
<dbReference type="KEGG" id="llm:llmg_1704"/>
<dbReference type="eggNOG" id="COG0787">
    <property type="taxonomic scope" value="Bacteria"/>
</dbReference>
<dbReference type="HOGENOM" id="CLU_028393_2_1_9"/>
<dbReference type="OrthoDB" id="9813814at2"/>
<dbReference type="PhylomeDB" id="Q9RLU5"/>
<dbReference type="UniPathway" id="UPA00042">
    <property type="reaction ID" value="UER00497"/>
</dbReference>
<dbReference type="Proteomes" id="UP000000364">
    <property type="component" value="Chromosome"/>
</dbReference>
<dbReference type="GO" id="GO:0005829">
    <property type="term" value="C:cytosol"/>
    <property type="evidence" value="ECO:0007669"/>
    <property type="project" value="TreeGrafter"/>
</dbReference>
<dbReference type="GO" id="GO:0008784">
    <property type="term" value="F:alanine racemase activity"/>
    <property type="evidence" value="ECO:0007669"/>
    <property type="project" value="UniProtKB-UniRule"/>
</dbReference>
<dbReference type="GO" id="GO:0030170">
    <property type="term" value="F:pyridoxal phosphate binding"/>
    <property type="evidence" value="ECO:0007669"/>
    <property type="project" value="UniProtKB-UniRule"/>
</dbReference>
<dbReference type="GO" id="GO:0030632">
    <property type="term" value="P:D-alanine biosynthetic process"/>
    <property type="evidence" value="ECO:0007669"/>
    <property type="project" value="UniProtKB-UniRule"/>
</dbReference>
<dbReference type="GO" id="GO:0009252">
    <property type="term" value="P:peptidoglycan biosynthetic process"/>
    <property type="evidence" value="ECO:0007669"/>
    <property type="project" value="TreeGrafter"/>
</dbReference>
<dbReference type="CDD" id="cd00430">
    <property type="entry name" value="PLPDE_III_AR"/>
    <property type="match status" value="1"/>
</dbReference>
<dbReference type="FunFam" id="2.40.37.10:FF:000006">
    <property type="entry name" value="Alanine racemase"/>
    <property type="match status" value="1"/>
</dbReference>
<dbReference type="FunFam" id="3.20.20.10:FF:000002">
    <property type="entry name" value="Alanine racemase"/>
    <property type="match status" value="1"/>
</dbReference>
<dbReference type="Gene3D" id="3.20.20.10">
    <property type="entry name" value="Alanine racemase"/>
    <property type="match status" value="1"/>
</dbReference>
<dbReference type="Gene3D" id="2.40.37.10">
    <property type="entry name" value="Lyase, Ornithine Decarboxylase, Chain A, domain 1"/>
    <property type="match status" value="1"/>
</dbReference>
<dbReference type="HAMAP" id="MF_01201">
    <property type="entry name" value="Ala_racemase"/>
    <property type="match status" value="1"/>
</dbReference>
<dbReference type="InterPro" id="IPR000821">
    <property type="entry name" value="Ala_racemase"/>
</dbReference>
<dbReference type="InterPro" id="IPR009006">
    <property type="entry name" value="Ala_racemase/Decarboxylase_C"/>
</dbReference>
<dbReference type="InterPro" id="IPR011079">
    <property type="entry name" value="Ala_racemase_C"/>
</dbReference>
<dbReference type="InterPro" id="IPR001608">
    <property type="entry name" value="Ala_racemase_N"/>
</dbReference>
<dbReference type="InterPro" id="IPR020622">
    <property type="entry name" value="Ala_racemase_pyridoxalP-BS"/>
</dbReference>
<dbReference type="InterPro" id="IPR029066">
    <property type="entry name" value="PLP-binding_barrel"/>
</dbReference>
<dbReference type="NCBIfam" id="TIGR00492">
    <property type="entry name" value="alr"/>
    <property type="match status" value="1"/>
</dbReference>
<dbReference type="PANTHER" id="PTHR30511">
    <property type="entry name" value="ALANINE RACEMASE"/>
    <property type="match status" value="1"/>
</dbReference>
<dbReference type="PANTHER" id="PTHR30511:SF0">
    <property type="entry name" value="ALANINE RACEMASE, CATABOLIC-RELATED"/>
    <property type="match status" value="1"/>
</dbReference>
<dbReference type="Pfam" id="PF00842">
    <property type="entry name" value="Ala_racemase_C"/>
    <property type="match status" value="1"/>
</dbReference>
<dbReference type="Pfam" id="PF01168">
    <property type="entry name" value="Ala_racemase_N"/>
    <property type="match status" value="1"/>
</dbReference>
<dbReference type="PRINTS" id="PR00992">
    <property type="entry name" value="ALARACEMASE"/>
</dbReference>
<dbReference type="SMART" id="SM01005">
    <property type="entry name" value="Ala_racemase_C"/>
    <property type="match status" value="1"/>
</dbReference>
<dbReference type="SUPFAM" id="SSF50621">
    <property type="entry name" value="Alanine racemase C-terminal domain-like"/>
    <property type="match status" value="1"/>
</dbReference>
<dbReference type="SUPFAM" id="SSF51419">
    <property type="entry name" value="PLP-binding barrel"/>
    <property type="match status" value="1"/>
</dbReference>
<dbReference type="PROSITE" id="PS00395">
    <property type="entry name" value="ALANINE_RACEMASE"/>
    <property type="match status" value="1"/>
</dbReference>
<organism>
    <name type="scientific">Lactococcus lactis subsp. cremoris (strain MG1363)</name>
    <dbReference type="NCBI Taxonomy" id="416870"/>
    <lineage>
        <taxon>Bacteria</taxon>
        <taxon>Bacillati</taxon>
        <taxon>Bacillota</taxon>
        <taxon>Bacilli</taxon>
        <taxon>Lactobacillales</taxon>
        <taxon>Streptococcaceae</taxon>
        <taxon>Lactococcus</taxon>
        <taxon>Lactococcus cremoris subsp. cremoris</taxon>
    </lineage>
</organism>
<protein>
    <recommendedName>
        <fullName evidence="1">Alanine racemase</fullName>
        <ecNumber evidence="1">5.1.1.1</ecNumber>
    </recommendedName>
</protein>
<comment type="function">
    <text evidence="1">Catalyzes the interconversion of L-alanine and D-alanine. May also act on other amino acids.</text>
</comment>
<comment type="catalytic activity">
    <reaction evidence="1">
        <text>L-alanine = D-alanine</text>
        <dbReference type="Rhea" id="RHEA:20249"/>
        <dbReference type="ChEBI" id="CHEBI:57416"/>
        <dbReference type="ChEBI" id="CHEBI:57972"/>
        <dbReference type="EC" id="5.1.1.1"/>
    </reaction>
</comment>
<comment type="cofactor">
    <cofactor evidence="1">
        <name>pyridoxal 5'-phosphate</name>
        <dbReference type="ChEBI" id="CHEBI:597326"/>
    </cofactor>
</comment>
<comment type="pathway">
    <text evidence="1">Amino-acid biosynthesis; D-alanine biosynthesis; D-alanine from L-alanine: step 1/1.</text>
</comment>
<comment type="biotechnology">
    <text>Homoalanine fermentation combined with the disruption of the alr gene allowed the industrial and stereospecific production (&gt;99%) of L-alanine, which is used as a food sweetener and for pharmaceutical applications.</text>
</comment>
<comment type="similarity">
    <text evidence="1">Belongs to the alanine racemase family.</text>
</comment>
<reference key="1">
    <citation type="journal article" date="1999" name="Nat. Biotechnol.">
        <title>Conversion of Lactococcus lactis from homolactic to homoalanine fermentation through metabolic engineering.</title>
        <authorList>
            <person name="Hols P."/>
            <person name="Kleerebezem M."/>
            <person name="Schank A.N."/>
            <person name="Ferain T."/>
            <person name="Hugenholtz J."/>
            <person name="Delcour J."/>
            <person name="De Vos W.M."/>
        </authorList>
    </citation>
    <scope>NUCLEOTIDE SEQUENCE [GENOMIC DNA]</scope>
</reference>
<reference key="2">
    <citation type="journal article" date="2007" name="J. Bacteriol.">
        <title>The complete genome sequence of the lactic acid bacterial paradigm Lactococcus lactis subsp. cremoris MG1363.</title>
        <authorList>
            <person name="Wegmann U."/>
            <person name="O'Connell-Motherway M."/>
            <person name="Zomer A."/>
            <person name="Buist G."/>
            <person name="Shearman C."/>
            <person name="Canchaya C."/>
            <person name="Ventura M."/>
            <person name="Goesmann A."/>
            <person name="Gasson M.J."/>
            <person name="Kuipers O.P."/>
            <person name="van Sinderen D."/>
            <person name="Kok J."/>
        </authorList>
    </citation>
    <scope>NUCLEOTIDE SEQUENCE [LARGE SCALE GENOMIC DNA]</scope>
    <source>
        <strain>MG1363</strain>
    </source>
</reference>
<gene>
    <name type="primary">alr</name>
    <name type="ordered locus">llmg_1704</name>
</gene>
<name>ALR_LACLM</name>
<accession>Q9RLU5</accession>
<accession>A2RLV4</accession>
<keyword id="KW-0413">Isomerase</keyword>
<keyword id="KW-0663">Pyridoxal phosphate</keyword>